<proteinExistence type="inferred from homology"/>
<comment type="function">
    <text evidence="1">Formaldehyde sensor. In the absence of formaldehyde, mediates repression of the frmRAB operon. Acts by binding directly to the frmRAB promoter region. In the presence of formaldehyde, it dissociates from the frmRAB promoter region and allows expression of the formaldehyde detoxification system encoded by frmA and frmB.</text>
</comment>
<comment type="subunit">
    <text evidence="1">Homotetramer.</text>
</comment>
<comment type="subcellular location">
    <subcellularLocation>
        <location evidence="1">Cytoplasm</location>
    </subcellularLocation>
</comment>
<comment type="similarity">
    <text evidence="2">Belongs to the FrmR/RcnR family.</text>
</comment>
<comment type="sequence caution" evidence="2">
    <conflict type="erroneous initiation">
        <sequence resource="EMBL-CDS" id="ABE05878"/>
    </conflict>
    <text>Extended N-terminus.</text>
</comment>
<name>FRMR_ECOUT</name>
<feature type="chain" id="PRO_0000340122" description="Transcriptional repressor FrmR">
    <location>
        <begin position="1"/>
        <end position="91"/>
    </location>
</feature>
<feature type="site" description="Important for response to formaldehyde" evidence="1">
    <location>
        <position position="2"/>
    </location>
</feature>
<feature type="site" description="Important for response to formaldehyde" evidence="1">
    <location>
        <position position="35"/>
    </location>
</feature>
<reference key="1">
    <citation type="journal article" date="2006" name="Proc. Natl. Acad. Sci. U.S.A.">
        <title>Identification of genes subject to positive selection in uropathogenic strains of Escherichia coli: a comparative genomics approach.</title>
        <authorList>
            <person name="Chen S.L."/>
            <person name="Hung C.-S."/>
            <person name="Xu J."/>
            <person name="Reigstad C.S."/>
            <person name="Magrini V."/>
            <person name="Sabo A."/>
            <person name="Blasiar D."/>
            <person name="Bieri T."/>
            <person name="Meyer R.R."/>
            <person name="Ozersky P."/>
            <person name="Armstrong J.R."/>
            <person name="Fulton R.S."/>
            <person name="Latreille J.P."/>
            <person name="Spieth J."/>
            <person name="Hooton T.M."/>
            <person name="Mardis E.R."/>
            <person name="Hultgren S.J."/>
            <person name="Gordon J.I."/>
        </authorList>
    </citation>
    <scope>NUCLEOTIDE SEQUENCE [LARGE SCALE GENOMIC DNA]</scope>
    <source>
        <strain>UTI89 / UPEC</strain>
    </source>
</reference>
<dbReference type="EMBL" id="CP000243">
    <property type="protein sequence ID" value="ABE05878.1"/>
    <property type="status" value="ALT_INIT"/>
    <property type="molecule type" value="Genomic_DNA"/>
</dbReference>
<dbReference type="RefSeq" id="WP_001141271.1">
    <property type="nucleotide sequence ID" value="NZ_CP064825.1"/>
</dbReference>
<dbReference type="SMR" id="Q1RFI6"/>
<dbReference type="GeneID" id="93777098"/>
<dbReference type="KEGG" id="eci:UTI89_C0377"/>
<dbReference type="HOGENOM" id="CLU_130332_3_0_6"/>
<dbReference type="Proteomes" id="UP000001952">
    <property type="component" value="Chromosome"/>
</dbReference>
<dbReference type="GO" id="GO:0005737">
    <property type="term" value="C:cytoplasm"/>
    <property type="evidence" value="ECO:0007669"/>
    <property type="project" value="UniProtKB-SubCell"/>
</dbReference>
<dbReference type="GO" id="GO:0003677">
    <property type="term" value="F:DNA binding"/>
    <property type="evidence" value="ECO:0007669"/>
    <property type="project" value="UniProtKB-KW"/>
</dbReference>
<dbReference type="GO" id="GO:0046872">
    <property type="term" value="F:metal ion binding"/>
    <property type="evidence" value="ECO:0007669"/>
    <property type="project" value="InterPro"/>
</dbReference>
<dbReference type="GO" id="GO:0045892">
    <property type="term" value="P:negative regulation of DNA-templated transcription"/>
    <property type="evidence" value="ECO:0007669"/>
    <property type="project" value="UniProtKB-ARBA"/>
</dbReference>
<dbReference type="CDD" id="cd10153">
    <property type="entry name" value="RcnR-FrmR-like_DUF156"/>
    <property type="match status" value="1"/>
</dbReference>
<dbReference type="FunFam" id="1.20.58.1000:FF:000002">
    <property type="entry name" value="Transcriptional repressor FrmR"/>
    <property type="match status" value="1"/>
</dbReference>
<dbReference type="Gene3D" id="1.20.58.1000">
    <property type="entry name" value="Metal-sensitive repressor, helix protomer"/>
    <property type="match status" value="1"/>
</dbReference>
<dbReference type="InterPro" id="IPR003735">
    <property type="entry name" value="Metal_Tscrpt_repr"/>
</dbReference>
<dbReference type="InterPro" id="IPR038390">
    <property type="entry name" value="Metal_Tscrpt_repr_sf"/>
</dbReference>
<dbReference type="NCBIfam" id="NF008464">
    <property type="entry name" value="PRK11352.1"/>
    <property type="match status" value="1"/>
</dbReference>
<dbReference type="PANTHER" id="PTHR33677:SF5">
    <property type="entry name" value="TRANSCRIPTIONAL REPRESSOR FRMR"/>
    <property type="match status" value="1"/>
</dbReference>
<dbReference type="PANTHER" id="PTHR33677">
    <property type="entry name" value="TRANSCRIPTIONAL REPRESSOR FRMR-RELATED"/>
    <property type="match status" value="1"/>
</dbReference>
<dbReference type="Pfam" id="PF02583">
    <property type="entry name" value="Trns_repr_metal"/>
    <property type="match status" value="1"/>
</dbReference>
<keyword id="KW-0963">Cytoplasm</keyword>
<keyword id="KW-0238">DNA-binding</keyword>
<keyword id="KW-0678">Repressor</keyword>
<keyword id="KW-0804">Transcription</keyword>
<keyword id="KW-0805">Transcription regulation</keyword>
<evidence type="ECO:0000250" key="1">
    <source>
        <dbReference type="UniProtKB" id="P0AAP3"/>
    </source>
</evidence>
<evidence type="ECO:0000305" key="2"/>
<gene>
    <name evidence="1" type="primary">frmR</name>
    <name type="ordered locus">UTI89_C0377</name>
</gene>
<protein>
    <recommendedName>
        <fullName evidence="1">Transcriptional repressor FrmR</fullName>
    </recommendedName>
</protein>
<organism>
    <name type="scientific">Escherichia coli (strain UTI89 / UPEC)</name>
    <dbReference type="NCBI Taxonomy" id="364106"/>
    <lineage>
        <taxon>Bacteria</taxon>
        <taxon>Pseudomonadati</taxon>
        <taxon>Pseudomonadota</taxon>
        <taxon>Gammaproteobacteria</taxon>
        <taxon>Enterobacterales</taxon>
        <taxon>Enterobacteriaceae</taxon>
        <taxon>Escherichia</taxon>
    </lineage>
</organism>
<accession>Q1RFI6</accession>
<sequence>MPSTPEEKKKVLTRVRRIRGQIDALERSLEGDAECRAILQQIAAVRGAANGLMAEVLESHIRETFDRNDCYSREVSQSVDDTIELVRAYLK</sequence>